<evidence type="ECO:0000250" key="1">
    <source>
        <dbReference type="UniProtKB" id="A0A509AF62"/>
    </source>
</evidence>
<evidence type="ECO:0000250" key="2">
    <source>
        <dbReference type="UniProtKB" id="O32164"/>
    </source>
</evidence>
<evidence type="ECO:0000250" key="3">
    <source>
        <dbReference type="UniProtKB" id="Q8IBT4"/>
    </source>
</evidence>
<evidence type="ECO:0000255" key="4"/>
<evidence type="ECO:0000269" key="5">
    <source>
    </source>
</evidence>
<evidence type="ECO:0000303" key="6">
    <source>
    </source>
</evidence>
<evidence type="ECO:0000305" key="7"/>
<evidence type="ECO:0000312" key="8">
    <source>
        <dbReference type="EMBL" id="AQY09986.1"/>
    </source>
</evidence>
<comment type="function">
    <text evidence="1 3 5">Catalyzes sulfur activation and mobilization in sulfur mobilization (SUF) pathway for iron-sulfur (Fe-S) cluster biogenesis (PubMed:30721667). Active when in complex with a partner protein SufE (PubMed:30721667). Required for apicoplast maintenance (By similarity). Plays a role in the development of sporozoites in oocysts in mosquitoes (By similarity).</text>
</comment>
<comment type="catalytic activity">
    <reaction evidence="5">
        <text>(sulfur carrier)-H + L-cysteine = (sulfur carrier)-SH + L-alanine</text>
        <dbReference type="Rhea" id="RHEA:43892"/>
        <dbReference type="Rhea" id="RHEA-COMP:14737"/>
        <dbReference type="Rhea" id="RHEA-COMP:14739"/>
        <dbReference type="ChEBI" id="CHEBI:29917"/>
        <dbReference type="ChEBI" id="CHEBI:35235"/>
        <dbReference type="ChEBI" id="CHEBI:57972"/>
        <dbReference type="ChEBI" id="CHEBI:64428"/>
        <dbReference type="EC" id="2.8.1.7"/>
    </reaction>
    <physiologicalReaction direction="left-to-right" evidence="7">
        <dbReference type="Rhea" id="RHEA:43893"/>
    </physiologicalReaction>
</comment>
<comment type="cofactor">
    <cofactor evidence="5">
        <name>pyridoxal 5'-phosphate</name>
        <dbReference type="ChEBI" id="CHEBI:597326"/>
    </cofactor>
</comment>
<comment type="pathway">
    <text evidence="7">Cofactor biosynthesis; iron-sulfur cluster biosynthesis.</text>
</comment>
<comment type="subunit">
    <text evidence="3">Monomer (By similarity). Interacts with SufE; interaction enhances cysteine desulfurase activity of SufS (By similarity).</text>
</comment>
<comment type="subcellular location">
    <subcellularLocation>
        <location evidence="5">Plastid</location>
        <location evidence="5">Apicoplast</location>
    </subcellularLocation>
</comment>
<comment type="similarity">
    <text evidence="7">Belongs to the class-V pyridoxal-phosphate-dependent aminotransferase family. Csd subfamily.</text>
</comment>
<organism evidence="8">
    <name type="scientific">Plasmodium vivax</name>
    <dbReference type="NCBI Taxonomy" id="5855"/>
    <lineage>
        <taxon>Eukaryota</taxon>
        <taxon>Sar</taxon>
        <taxon>Alveolata</taxon>
        <taxon>Apicomplexa</taxon>
        <taxon>Aconoidasida</taxon>
        <taxon>Haemosporida</taxon>
        <taxon>Plasmodiidae</taxon>
        <taxon>Plasmodium</taxon>
        <taxon>Plasmodium (Plasmodium)</taxon>
    </lineage>
</organism>
<feature type="signal peptide" evidence="4">
    <location>
        <begin position="1"/>
        <end position="22"/>
    </location>
</feature>
<feature type="chain" id="PRO_0000459468" description="Cysteine desulfurase SufS">
    <location>
        <begin position="23"/>
        <end position="551"/>
    </location>
</feature>
<feature type="active site" description="Cysteine persulfide intermediate" evidence="2">
    <location>
        <position position="500"/>
    </location>
</feature>
<feature type="modified residue" description="N6-(pyridoxal phosphate)lysine" evidence="2">
    <location>
        <position position="327"/>
    </location>
</feature>
<keyword id="KW-0933">Apicoplast</keyword>
<keyword id="KW-0934">Plastid</keyword>
<keyword id="KW-0663">Pyridoxal phosphate</keyword>
<keyword id="KW-0732">Signal</keyword>
<keyword id="KW-0808">Transferase</keyword>
<gene>
    <name evidence="6" type="primary">SufS</name>
</gene>
<accession>A0A2K8FTN3</accession>
<sequence length="551" mass="62461">MRPSSAAWICLLLRIANYTCYSYHVGRSDLYVGRAPRRMTKLSYENGKPHIDAGVVNYFKQIREEFPFFKRENCPAYFDSAATTQKPACVIGVSCPIAQLHRFVSPLCLTASPHRFASPLRLTASPHRFASPQKLTQFYSSENANVHRGIYKMSLDATRSYEQVRKTIKNFINCEREDEIIFTSGTTHGLNLICSMLMERVIKRRQDEIHLTYLEHHSNIVPWQEQVKRKKKGKIKYIPLKSTGYIHIKRLRKRINRNTKVVSISHVSNVLGNIQKLTAIIKAVKEKNKNAIVIVDAAQSFAHIRYDLRRMEANNCCPDVLIASGHKFCAPLGCGFMYLKNTLTCSYKFKPLLYGSNMITTVGKYESEFESPPQLFESGTQNIAGVISMGVAINFLERIDQRLLCRYEMFLYDMLVYHLGQHLQRGLVQLPGGVSESGGSSGGSGGSRPTDPCRLYIHNSRRGGGKKVPILPLWSDQFSSFDLVTFLDFKNVCIRSGHHCASLLLKEFLRIPDCARVSLFFYNTPEEVQFLAEQIASIARMLSGMNRGGVK</sequence>
<protein>
    <recommendedName>
        <fullName evidence="7">Cysteine desulfurase SufS</fullName>
        <shortName evidence="6">PvSufS</shortName>
        <ecNumber evidence="5">2.8.1.7</ecNumber>
    </recommendedName>
</protein>
<dbReference type="EC" id="2.8.1.7" evidence="5"/>
<dbReference type="EMBL" id="KY662008">
    <property type="protein sequence ID" value="AQY09986.1"/>
    <property type="molecule type" value="mRNA"/>
</dbReference>
<dbReference type="SMR" id="A0A2K8FTN3"/>
<dbReference type="VEuPathDB" id="PlasmoDB:PVP01_0312400"/>
<dbReference type="VEuPathDB" id="PlasmoDB:PVPAM_030017000"/>
<dbReference type="VEuPathDB" id="PlasmoDB:PVW1_030019600"/>
<dbReference type="VEuPathDB" id="PlasmoDB:PVX_000600"/>
<dbReference type="UniPathway" id="UPA00266"/>
<dbReference type="GO" id="GO:0020011">
    <property type="term" value="C:apicoplast"/>
    <property type="evidence" value="ECO:0007669"/>
    <property type="project" value="UniProtKB-SubCell"/>
</dbReference>
<dbReference type="GO" id="GO:0016740">
    <property type="term" value="F:transferase activity"/>
    <property type="evidence" value="ECO:0007669"/>
    <property type="project" value="UniProtKB-KW"/>
</dbReference>
<dbReference type="Gene3D" id="3.90.1150.10">
    <property type="entry name" value="Aspartate Aminotransferase, domain 1"/>
    <property type="match status" value="1"/>
</dbReference>
<dbReference type="Gene3D" id="3.40.640.10">
    <property type="entry name" value="Type I PLP-dependent aspartate aminotransferase-like (Major domain)"/>
    <property type="match status" value="1"/>
</dbReference>
<dbReference type="InterPro" id="IPR000192">
    <property type="entry name" value="Aminotrans_V_dom"/>
</dbReference>
<dbReference type="InterPro" id="IPR015424">
    <property type="entry name" value="PyrdxlP-dep_Trfase"/>
</dbReference>
<dbReference type="InterPro" id="IPR015421">
    <property type="entry name" value="PyrdxlP-dep_Trfase_major"/>
</dbReference>
<dbReference type="InterPro" id="IPR015422">
    <property type="entry name" value="PyrdxlP-dep_Trfase_small"/>
</dbReference>
<dbReference type="PANTHER" id="PTHR43586">
    <property type="entry name" value="CYSTEINE DESULFURASE"/>
    <property type="match status" value="1"/>
</dbReference>
<dbReference type="PANTHER" id="PTHR43586:SF8">
    <property type="entry name" value="CYSTEINE DESULFURASE 1, CHLOROPLASTIC"/>
    <property type="match status" value="1"/>
</dbReference>
<dbReference type="Pfam" id="PF00266">
    <property type="entry name" value="Aminotran_5"/>
    <property type="match status" value="2"/>
</dbReference>
<dbReference type="SUPFAM" id="SSF53383">
    <property type="entry name" value="PLP-dependent transferases"/>
    <property type="match status" value="1"/>
</dbReference>
<reference evidence="7" key="1">
    <citation type="journal article" date="2019" name="Exp. Parasitol.">
        <title>Functional analysis of iron-sulfur cluster biogenesis (SUF pathway) from Plasmodium vivax clinical isolates.</title>
        <authorList>
            <person name="Pala Z.R."/>
            <person name="Saxena V."/>
            <person name="Saggu G.S."/>
            <person name="Mani S.K."/>
            <person name="Pareek R.P."/>
            <person name="Kochar S.K."/>
            <person name="Kochar D.K."/>
            <person name="Garg S."/>
        </authorList>
    </citation>
    <scope>NUCLEOTIDE SEQUENCE [MRNA]</scope>
    <scope>FUNCTION</scope>
    <scope>CATALYTIC ACTIVITY</scope>
    <scope>COFACTOR</scope>
    <scope>SUBCELLULAR LOCATION</scope>
    <source>
        <strain evidence="6">Indian</strain>
    </source>
</reference>
<proteinExistence type="evidence at protein level"/>
<name>SUFS_PLAVI</name>